<protein>
    <recommendedName>
        <fullName>Aldo-keto reductase AKR2E4</fullName>
        <ecNumber>1.1.1.-</ecNumber>
    </recommendedName>
    <alternativeName>
        <fullName>3-dehydroecdysone reductase</fullName>
    </alternativeName>
    <alternativeName>
        <fullName>Aldo-keto reductase 2E</fullName>
    </alternativeName>
</protein>
<evidence type="ECO:0000250" key="1"/>
<evidence type="ECO:0000269" key="2">
    <source>
    </source>
</evidence>
<evidence type="ECO:0000305" key="3"/>
<evidence type="ECO:0007829" key="4">
    <source>
        <dbReference type="PDB" id="3WCZ"/>
    </source>
</evidence>
<sequence>MAVQAPCIQLNDGNTIPIVALGTGRGTAKESDSIDEVRQAVYWAIEAGYRHIDTAAVYQDEEQVGQGIAEAIANGLVTREELFVTTKLWNDKHARDQVVPALQESLKKLGLDYIDLYLIHFPIATKPDDSPDNIDYLETWQGMQDARQLGLARSIGVSNFNATQITRLVSNSYIRPVINQIEVNPTNTQEPLVAHCQSLGIAVMAYSPFGFVVSRGQTGAPPPRSDDPTLTALANKYRKSVGQILLRYLIDRGLIPIPKSTNKQRIAQNIDLFDFQLTFEEVAAINQFNKNHRVIDISDWKDYPNYPN</sequence>
<feature type="chain" id="PRO_0000425542" description="Aldo-keto reductase AKR2E4">
    <location>
        <begin position="1"/>
        <end position="308"/>
    </location>
</feature>
<feature type="active site" description="Proton donor" evidence="1">
    <location>
        <position position="58"/>
    </location>
</feature>
<feature type="binding site" evidence="2">
    <location>
        <begin position="22"/>
        <end position="29"/>
    </location>
    <ligand>
        <name>NADP(+)</name>
        <dbReference type="ChEBI" id="CHEBI:58349"/>
    </ligand>
</feature>
<feature type="binding site" evidence="2">
    <location>
        <position position="53"/>
    </location>
    <ligand>
        <name>NADP(+)</name>
        <dbReference type="ChEBI" id="CHEBI:58349"/>
    </ligand>
</feature>
<feature type="binding site" evidence="2">
    <location>
        <begin position="158"/>
        <end position="159"/>
    </location>
    <ligand>
        <name>NADP(+)</name>
        <dbReference type="ChEBI" id="CHEBI:58349"/>
    </ligand>
</feature>
<feature type="binding site" evidence="2">
    <location>
        <position position="215"/>
    </location>
    <ligand>
        <name>NADP(+)</name>
        <dbReference type="ChEBI" id="CHEBI:58349"/>
    </ligand>
</feature>
<feature type="binding site" evidence="2">
    <location>
        <begin position="259"/>
        <end position="269"/>
    </location>
    <ligand>
        <name>NADP(+)</name>
        <dbReference type="ChEBI" id="CHEBI:58349"/>
    </ligand>
</feature>
<feature type="strand" evidence="4">
    <location>
        <begin position="7"/>
        <end position="9"/>
    </location>
</feature>
<feature type="strand" evidence="4">
    <location>
        <begin position="15"/>
        <end position="18"/>
    </location>
</feature>
<feature type="helix" evidence="4">
    <location>
        <begin position="35"/>
        <end position="46"/>
    </location>
</feature>
<feature type="strand" evidence="4">
    <location>
        <begin position="51"/>
        <end position="53"/>
    </location>
</feature>
<feature type="helix" evidence="4">
    <location>
        <begin position="56"/>
        <end position="58"/>
    </location>
</feature>
<feature type="helix" evidence="4">
    <location>
        <begin position="61"/>
        <end position="73"/>
    </location>
</feature>
<feature type="helix" evidence="4">
    <location>
        <begin position="79"/>
        <end position="81"/>
    </location>
</feature>
<feature type="strand" evidence="4">
    <location>
        <begin position="83"/>
        <end position="88"/>
    </location>
</feature>
<feature type="helix" evidence="4">
    <location>
        <begin position="95"/>
        <end position="97"/>
    </location>
</feature>
<feature type="helix" evidence="4">
    <location>
        <begin position="98"/>
        <end position="109"/>
    </location>
</feature>
<feature type="strand" evidence="4">
    <location>
        <begin position="114"/>
        <end position="120"/>
    </location>
</feature>
<feature type="helix" evidence="4">
    <location>
        <begin position="136"/>
        <end position="148"/>
    </location>
</feature>
<feature type="strand" evidence="4">
    <location>
        <begin position="151"/>
        <end position="159"/>
    </location>
</feature>
<feature type="helix" evidence="4">
    <location>
        <begin position="162"/>
        <end position="170"/>
    </location>
</feature>
<feature type="strand" evidence="4">
    <location>
        <begin position="177"/>
        <end position="182"/>
    </location>
</feature>
<feature type="helix" evidence="4">
    <location>
        <begin position="190"/>
        <end position="198"/>
    </location>
</feature>
<feature type="strand" evidence="4">
    <location>
        <begin position="202"/>
        <end position="207"/>
    </location>
</feature>
<feature type="helix" evidence="4">
    <location>
        <begin position="210"/>
        <end position="212"/>
    </location>
</feature>
<feature type="helix" evidence="4">
    <location>
        <begin position="228"/>
        <end position="237"/>
    </location>
</feature>
<feature type="helix" evidence="4">
    <location>
        <begin position="241"/>
        <end position="251"/>
    </location>
</feature>
<feature type="helix" evidence="4">
    <location>
        <begin position="263"/>
        <end position="270"/>
    </location>
</feature>
<feature type="helix" evidence="4">
    <location>
        <begin position="279"/>
        <end position="286"/>
    </location>
</feature>
<feature type="helix" evidence="4">
    <location>
        <begin position="298"/>
        <end position="300"/>
    </location>
</feature>
<proteinExistence type="evidence at protein level"/>
<dbReference type="EC" id="1.1.1.-"/>
<dbReference type="EMBL" id="AB701383">
    <property type="protein sequence ID" value="BAL70378.1"/>
    <property type="molecule type" value="mRNA"/>
</dbReference>
<dbReference type="RefSeq" id="NP_001296537.1">
    <property type="nucleotide sequence ID" value="NM_001309608.1"/>
</dbReference>
<dbReference type="PDB" id="3WCZ">
    <property type="method" value="X-ray"/>
    <property type="resolution" value="1.30 A"/>
    <property type="chains" value="A=1-308"/>
</dbReference>
<dbReference type="PDBsum" id="3WCZ"/>
<dbReference type="SMR" id="H9JTG9"/>
<dbReference type="STRING" id="7091.H9JTG9"/>
<dbReference type="PaxDb" id="7091-BGIBMGA012831-TA"/>
<dbReference type="EnsemblMetazoa" id="NM_001309608.1">
    <property type="protein sequence ID" value="NP_001296537.1"/>
    <property type="gene ID" value="LOC101743035"/>
</dbReference>
<dbReference type="GeneID" id="101743035"/>
<dbReference type="KEGG" id="bmor:101743035"/>
<dbReference type="eggNOG" id="KOG1577">
    <property type="taxonomic scope" value="Eukaryota"/>
</dbReference>
<dbReference type="HOGENOM" id="CLU_023205_0_0_1"/>
<dbReference type="InParanoid" id="H9JTG9"/>
<dbReference type="OMA" id="LNTGHEM"/>
<dbReference type="SABIO-RK" id="H9JTG9"/>
<dbReference type="EvolutionaryTrace" id="H9JTG9"/>
<dbReference type="Proteomes" id="UP000005204">
    <property type="component" value="Unassembled WGS sequence"/>
</dbReference>
<dbReference type="GO" id="GO:0016491">
    <property type="term" value="F:oxidoreductase activity"/>
    <property type="evidence" value="ECO:0007669"/>
    <property type="project" value="UniProtKB-KW"/>
</dbReference>
<dbReference type="GO" id="GO:0008202">
    <property type="term" value="P:steroid metabolic process"/>
    <property type="evidence" value="ECO:0007669"/>
    <property type="project" value="UniProtKB-KW"/>
</dbReference>
<dbReference type="CDD" id="cd19116">
    <property type="entry name" value="AKR_AKR2E1-5"/>
    <property type="match status" value="1"/>
</dbReference>
<dbReference type="FunFam" id="3.20.20.100:FF:000002">
    <property type="entry name" value="2,5-diketo-D-gluconic acid reductase A"/>
    <property type="match status" value="1"/>
</dbReference>
<dbReference type="Gene3D" id="3.20.20.100">
    <property type="entry name" value="NADP-dependent oxidoreductase domain"/>
    <property type="match status" value="1"/>
</dbReference>
<dbReference type="InterPro" id="IPR020471">
    <property type="entry name" value="AKR"/>
</dbReference>
<dbReference type="InterPro" id="IPR044488">
    <property type="entry name" value="AKR2E"/>
</dbReference>
<dbReference type="InterPro" id="IPR018170">
    <property type="entry name" value="Aldo/ket_reductase_CS"/>
</dbReference>
<dbReference type="InterPro" id="IPR023210">
    <property type="entry name" value="NADP_OxRdtase_dom"/>
</dbReference>
<dbReference type="InterPro" id="IPR036812">
    <property type="entry name" value="NADP_OxRdtase_dom_sf"/>
</dbReference>
<dbReference type="PANTHER" id="PTHR11732">
    <property type="entry name" value="ALDO/KETO REDUCTASE"/>
    <property type="match status" value="1"/>
</dbReference>
<dbReference type="Pfam" id="PF00248">
    <property type="entry name" value="Aldo_ket_red"/>
    <property type="match status" value="1"/>
</dbReference>
<dbReference type="PIRSF" id="PIRSF000097">
    <property type="entry name" value="AKR"/>
    <property type="match status" value="1"/>
</dbReference>
<dbReference type="PRINTS" id="PR00069">
    <property type="entry name" value="ALDKETRDTASE"/>
</dbReference>
<dbReference type="SUPFAM" id="SSF51430">
    <property type="entry name" value="NAD(P)-linked oxidoreductase"/>
    <property type="match status" value="1"/>
</dbReference>
<dbReference type="PROSITE" id="PS00798">
    <property type="entry name" value="ALDOKETO_REDUCTASE_1"/>
    <property type="match status" value="1"/>
</dbReference>
<dbReference type="PROSITE" id="PS00062">
    <property type="entry name" value="ALDOKETO_REDUCTASE_2"/>
    <property type="match status" value="1"/>
</dbReference>
<dbReference type="PROSITE" id="PS00063">
    <property type="entry name" value="ALDOKETO_REDUCTASE_3"/>
    <property type="match status" value="1"/>
</dbReference>
<reference key="1">
    <citation type="journal article" date="2013" name="Arch. Biochem. Biophys.">
        <title>Identification, characterization, and crystal structure of an aldo-keto reductase (AKR2E4) from the silkworm Bombyx mori.</title>
        <authorList>
            <person name="Yamamoto K."/>
            <person name="Wilson D.K."/>
        </authorList>
    </citation>
    <scope>NUCLEOTIDE SEQUENCE [MRNA]</scope>
    <scope>X-RAY CRYSTALLOGRAPHY (1.3 ANGSTROMS) IN COMPLEX WITH NADP</scope>
    <scope>INDUCTION BY DIAZINON</scope>
    <scope>FUNCTION</scope>
    <scope>TISSUE SPECIFICITY</scope>
    <scope>ACTIVITY REGULATION</scope>
    <scope>BIOPHYSICOCHEMICAL PROPERTIES</scope>
    <source>
        <tissue>Larva</tissue>
    </source>
</reference>
<reference key="2">
    <citation type="journal article" date="2008" name="Insect Biochem. Mol. Biol.">
        <title>The genome of a lepidopteran model insect, the silkworm Bombyx mori.</title>
        <authorList>
            <consortium name="International Silkworm Genome Consortium"/>
        </authorList>
    </citation>
    <scope>NUCLEOTIDE SEQUENCE [LARGE SCALE GENOMIC DNA]</scope>
    <source>
        <strain>p50T</strain>
    </source>
</reference>
<gene>
    <name type="primary">akr2e</name>
    <name type="synonym">AKR2E4</name>
</gene>
<keyword id="KW-0002">3D-structure</keyword>
<keyword id="KW-0443">Lipid metabolism</keyword>
<keyword id="KW-0521">NADP</keyword>
<keyword id="KW-0560">Oxidoreductase</keyword>
<keyword id="KW-1185">Reference proteome</keyword>
<keyword id="KW-0753">Steroid metabolism</keyword>
<organism>
    <name type="scientific">Bombyx mori</name>
    <name type="common">Silk moth</name>
    <dbReference type="NCBI Taxonomy" id="7091"/>
    <lineage>
        <taxon>Eukaryota</taxon>
        <taxon>Metazoa</taxon>
        <taxon>Ecdysozoa</taxon>
        <taxon>Arthropoda</taxon>
        <taxon>Hexapoda</taxon>
        <taxon>Insecta</taxon>
        <taxon>Pterygota</taxon>
        <taxon>Neoptera</taxon>
        <taxon>Endopterygota</taxon>
        <taxon>Lepidoptera</taxon>
        <taxon>Glossata</taxon>
        <taxon>Ditrysia</taxon>
        <taxon>Bombycoidea</taxon>
        <taxon>Bombycidae</taxon>
        <taxon>Bombycinae</taxon>
        <taxon>Bombyx</taxon>
    </lineage>
</organism>
<name>AK2E4_BOMMO</name>
<comment type="function">
    <text evidence="2">NADP-dependent oxidoreductase with high 3-dehydroecdysone reductase activity. May play a role in the regulation of molting. Has lower activity with phenylglyoxal and isatin (in vitro). Has no activity with NADH as cosubstrate. Has no activity with nitrobenzaldehyde and 3-hydroxybenzaldehyde.</text>
</comment>
<comment type="activity regulation">
    <text evidence="2">Subject to substrate inhibition by high levels of 3-dehydroecdysone.</text>
</comment>
<comment type="biophysicochemical properties">
    <kinetics>
        <KM evidence="2">0.0044 mM for 3-dehydroecdysone</KM>
    </kinetics>
</comment>
<comment type="tissue specificity">
    <text evidence="2">Detected in hemolymph (at protein level). Detected in larval ovary.</text>
</comment>
<comment type="developmental stage">
    <text>During larval development, expression in the hemolymph increases at day 3 before the fourth ecdysis and then decreases again. Levels increase again at day 8 and then decrease again. Not detectable in pupae, or present at very low levels.</text>
</comment>
<comment type="induction">
    <text evidence="2">Up-regulated by the insecticide diazinon.</text>
</comment>
<comment type="similarity">
    <text evidence="3">Belongs to the short-chain dehydrogenases/reductases (SDR) family.</text>
</comment>
<accession>H9JTG9</accession>